<proteinExistence type="inferred from homology"/>
<keyword id="KW-1015">Disulfide bond</keyword>
<keyword id="KW-0964">Secreted</keyword>
<keyword id="KW-0732">Signal</keyword>
<keyword id="KW-0800">Toxin</keyword>
<dbReference type="EMBL" id="JZ168713">
    <property type="status" value="NOT_ANNOTATED_CDS"/>
    <property type="molecule type" value="mRNA"/>
</dbReference>
<dbReference type="GO" id="GO:0005576">
    <property type="term" value="C:extracellular region"/>
    <property type="evidence" value="ECO:0007669"/>
    <property type="project" value="UniProtKB-SubCell"/>
</dbReference>
<dbReference type="GO" id="GO:0090729">
    <property type="term" value="F:toxin activity"/>
    <property type="evidence" value="ECO:0007669"/>
    <property type="project" value="UniProtKB-KW"/>
</dbReference>
<dbReference type="InterPro" id="IPR049518">
    <property type="entry name" value="Pilosulin"/>
</dbReference>
<dbReference type="Pfam" id="PF17499">
    <property type="entry name" value="Pilosulin"/>
    <property type="match status" value="1"/>
</dbReference>
<organism>
    <name type="scientific">Tetramorium bicarinatum</name>
    <name type="common">Tramp ant</name>
    <dbReference type="NCBI Taxonomy" id="219812"/>
    <lineage>
        <taxon>Eukaryota</taxon>
        <taxon>Metazoa</taxon>
        <taxon>Ecdysozoa</taxon>
        <taxon>Arthropoda</taxon>
        <taxon>Hexapoda</taxon>
        <taxon>Insecta</taxon>
        <taxon>Pterygota</taxon>
        <taxon>Neoptera</taxon>
        <taxon>Endopterygota</taxon>
        <taxon>Hymenoptera</taxon>
        <taxon>Apocrita</taxon>
        <taxon>Aculeata</taxon>
        <taxon>Formicoidea</taxon>
        <taxon>Formicidae</taxon>
        <taxon>Myrmicinae</taxon>
        <taxon>Tetramorium</taxon>
    </lineage>
</organism>
<feature type="signal peptide" evidence="1">
    <location>
        <begin position="1"/>
        <end position="26"/>
    </location>
</feature>
<feature type="propeptide" id="PRO_0000447055" evidence="5">
    <location>
        <begin position="27"/>
        <end position="38"/>
    </location>
</feature>
<feature type="peptide" id="PRO_0000447056" description="U-myrmicitoxin(01)-Tb5a">
    <location>
        <begin position="39"/>
        <end position="54"/>
    </location>
</feature>
<comment type="subcellular location">
    <subcellularLocation>
        <location evidence="4">Secreted</location>
    </subcellularLocation>
</comment>
<comment type="tissue specificity">
    <text evidence="4">Expressed by the venom gland.</text>
</comment>
<comment type="PTM">
    <text evidence="3">Contains 1 disulfide bond.</text>
</comment>
<comment type="similarity">
    <text evidence="3">Belongs to the formicidae venom precursor-01 superfamily.</text>
</comment>
<name>B15A_TETBN</name>
<evidence type="ECO:0000255" key="1"/>
<evidence type="ECO:0000303" key="2">
    <source>
    </source>
</evidence>
<evidence type="ECO:0000305" key="3"/>
<evidence type="ECO:0000305" key="4">
    <source>
    </source>
</evidence>
<evidence type="ECO:0000305" key="5">
    <source>
    </source>
</evidence>
<sequence>MQLSHLLLAFAMIFVMTIMYAPQVQADAWADANADADVNCEVTPYHPDCRGVMP</sequence>
<reference key="1">
    <citation type="journal article" date="2013" name="Toxicon">
        <title>Profiling the venom gland transcriptome of Tetramorium bicarinatum (Hymenoptera: Formicidae): the first transcriptome analysis of an ant species.</title>
        <authorList>
            <person name="Bouzid W."/>
            <person name="Klopp C."/>
            <person name="Verdenaud M."/>
            <person name="Ducancel F."/>
            <person name="Vetillard A."/>
        </authorList>
    </citation>
    <scope>NUCLEOTIDE SEQUENCE [MRNA]</scope>
    <source>
        <tissue>Venom gland</tissue>
    </source>
</reference>
<reference key="2">
    <citation type="journal article" date="2018" name="Sci. Adv.">
        <title>A comprehensive portrait of the venom of the giant red bull ant, Myrmecia gulosa, reveals a hyperdiverse hymenopteran toxin gene family.</title>
        <authorList>
            <person name="Robinson S.D."/>
            <person name="Mueller A."/>
            <person name="Clayton D."/>
            <person name="Starobova H."/>
            <person name="Hamilton B.R."/>
            <person name="Payne R.J."/>
            <person name="Vetter I."/>
            <person name="King G.F."/>
            <person name="Undheim E.A.B."/>
        </authorList>
    </citation>
    <scope>NOMENCLATURE</scope>
</reference>
<protein>
    <recommendedName>
        <fullName evidence="3">U-myrmicitoxin(01)-Tb5a</fullName>
        <shortName evidence="2">MYRTX(01)-Tb5</shortName>
        <shortName evidence="3">U-MYRTX(01)-Tb5a</shortName>
    </recommendedName>
</protein>
<accession>P0DSI6</accession>